<keyword id="KW-0963">Cytoplasm</keyword>
<keyword id="KW-0369">Histidine metabolism</keyword>
<keyword id="KW-0378">Hydrolase</keyword>
<keyword id="KW-0408">Iron</keyword>
<keyword id="KW-0479">Metal-binding</keyword>
<keyword id="KW-1185">Reference proteome</keyword>
<keyword id="KW-0862">Zinc</keyword>
<gene>
    <name evidence="1" type="primary">hutI</name>
    <name type="ordered locus">TTE0451</name>
</gene>
<protein>
    <recommendedName>
        <fullName evidence="1">Imidazolonepropionase</fullName>
        <ecNumber evidence="1">3.5.2.7</ecNumber>
    </recommendedName>
    <alternativeName>
        <fullName evidence="1">Imidazolone-5-propionate hydrolase</fullName>
    </alternativeName>
</protein>
<dbReference type="EC" id="3.5.2.7" evidence="1"/>
<dbReference type="EMBL" id="AE008691">
    <property type="protein sequence ID" value="AAM23735.1"/>
    <property type="molecule type" value="Genomic_DNA"/>
</dbReference>
<dbReference type="RefSeq" id="WP_011024889.1">
    <property type="nucleotide sequence ID" value="NC_003869.1"/>
</dbReference>
<dbReference type="SMR" id="Q8RCH7"/>
<dbReference type="STRING" id="273068.TTE0451"/>
<dbReference type="KEGG" id="tte:TTE0451"/>
<dbReference type="eggNOG" id="COG1228">
    <property type="taxonomic scope" value="Bacteria"/>
</dbReference>
<dbReference type="HOGENOM" id="CLU_041647_0_1_9"/>
<dbReference type="OrthoDB" id="9807210at2"/>
<dbReference type="UniPathway" id="UPA00379">
    <property type="reaction ID" value="UER00551"/>
</dbReference>
<dbReference type="Proteomes" id="UP000000555">
    <property type="component" value="Chromosome"/>
</dbReference>
<dbReference type="GO" id="GO:0005737">
    <property type="term" value="C:cytoplasm"/>
    <property type="evidence" value="ECO:0007669"/>
    <property type="project" value="UniProtKB-SubCell"/>
</dbReference>
<dbReference type="GO" id="GO:0050480">
    <property type="term" value="F:imidazolonepropionase activity"/>
    <property type="evidence" value="ECO:0007669"/>
    <property type="project" value="UniProtKB-UniRule"/>
</dbReference>
<dbReference type="GO" id="GO:0005506">
    <property type="term" value="F:iron ion binding"/>
    <property type="evidence" value="ECO:0007669"/>
    <property type="project" value="UniProtKB-UniRule"/>
</dbReference>
<dbReference type="GO" id="GO:0008270">
    <property type="term" value="F:zinc ion binding"/>
    <property type="evidence" value="ECO:0007669"/>
    <property type="project" value="UniProtKB-UniRule"/>
</dbReference>
<dbReference type="GO" id="GO:0019556">
    <property type="term" value="P:L-histidine catabolic process to glutamate and formamide"/>
    <property type="evidence" value="ECO:0007669"/>
    <property type="project" value="UniProtKB-UniPathway"/>
</dbReference>
<dbReference type="GO" id="GO:0019557">
    <property type="term" value="P:L-histidine catabolic process to glutamate and formate"/>
    <property type="evidence" value="ECO:0007669"/>
    <property type="project" value="UniProtKB-UniPathway"/>
</dbReference>
<dbReference type="CDD" id="cd01296">
    <property type="entry name" value="Imidazolone-5PH"/>
    <property type="match status" value="1"/>
</dbReference>
<dbReference type="FunFam" id="3.20.20.140:FF:000007">
    <property type="entry name" value="Imidazolonepropionase"/>
    <property type="match status" value="1"/>
</dbReference>
<dbReference type="Gene3D" id="3.20.20.140">
    <property type="entry name" value="Metal-dependent hydrolases"/>
    <property type="match status" value="1"/>
</dbReference>
<dbReference type="Gene3D" id="2.30.40.10">
    <property type="entry name" value="Urease, subunit C, domain 1"/>
    <property type="match status" value="1"/>
</dbReference>
<dbReference type="HAMAP" id="MF_00372">
    <property type="entry name" value="HutI"/>
    <property type="match status" value="1"/>
</dbReference>
<dbReference type="InterPro" id="IPR006680">
    <property type="entry name" value="Amidohydro-rel"/>
</dbReference>
<dbReference type="InterPro" id="IPR005920">
    <property type="entry name" value="HutI"/>
</dbReference>
<dbReference type="InterPro" id="IPR011059">
    <property type="entry name" value="Metal-dep_hydrolase_composite"/>
</dbReference>
<dbReference type="InterPro" id="IPR032466">
    <property type="entry name" value="Metal_Hydrolase"/>
</dbReference>
<dbReference type="NCBIfam" id="TIGR01224">
    <property type="entry name" value="hutI"/>
    <property type="match status" value="1"/>
</dbReference>
<dbReference type="PANTHER" id="PTHR42752">
    <property type="entry name" value="IMIDAZOLONEPROPIONASE"/>
    <property type="match status" value="1"/>
</dbReference>
<dbReference type="PANTHER" id="PTHR42752:SF1">
    <property type="entry name" value="IMIDAZOLONEPROPIONASE-RELATED"/>
    <property type="match status" value="1"/>
</dbReference>
<dbReference type="Pfam" id="PF01979">
    <property type="entry name" value="Amidohydro_1"/>
    <property type="match status" value="1"/>
</dbReference>
<dbReference type="SUPFAM" id="SSF51338">
    <property type="entry name" value="Composite domain of metallo-dependent hydrolases"/>
    <property type="match status" value="1"/>
</dbReference>
<dbReference type="SUPFAM" id="SSF51556">
    <property type="entry name" value="Metallo-dependent hydrolases"/>
    <property type="match status" value="1"/>
</dbReference>
<evidence type="ECO:0000255" key="1">
    <source>
        <dbReference type="HAMAP-Rule" id="MF_00372"/>
    </source>
</evidence>
<comment type="function">
    <text evidence="1">Catalyzes the hydrolytic cleavage of the carbon-nitrogen bond in imidazolone-5-propanoate to yield N-formimidoyl-L-glutamate. It is the third step in the universal histidine degradation pathway.</text>
</comment>
<comment type="catalytic activity">
    <reaction evidence="1">
        <text>4-imidazolone-5-propanoate + H2O = N-formimidoyl-L-glutamate</text>
        <dbReference type="Rhea" id="RHEA:23660"/>
        <dbReference type="ChEBI" id="CHEBI:15377"/>
        <dbReference type="ChEBI" id="CHEBI:58928"/>
        <dbReference type="ChEBI" id="CHEBI:77893"/>
        <dbReference type="EC" id="3.5.2.7"/>
    </reaction>
</comment>
<comment type="cofactor">
    <cofactor evidence="1">
        <name>Zn(2+)</name>
        <dbReference type="ChEBI" id="CHEBI:29105"/>
    </cofactor>
    <cofactor evidence="1">
        <name>Fe(3+)</name>
        <dbReference type="ChEBI" id="CHEBI:29034"/>
    </cofactor>
    <text evidence="1">Binds 1 zinc or iron ion per subunit.</text>
</comment>
<comment type="pathway">
    <text evidence="1">Amino-acid degradation; L-histidine degradation into L-glutamate; N-formimidoyl-L-glutamate from L-histidine: step 3/3.</text>
</comment>
<comment type="subcellular location">
    <subcellularLocation>
        <location evidence="1">Cytoplasm</location>
    </subcellularLocation>
</comment>
<comment type="similarity">
    <text evidence="1">Belongs to the metallo-dependent hydrolases superfamily. HutI family.</text>
</comment>
<reference key="1">
    <citation type="journal article" date="2002" name="Genome Res.">
        <title>A complete sequence of the T. tengcongensis genome.</title>
        <authorList>
            <person name="Bao Q."/>
            <person name="Tian Y."/>
            <person name="Li W."/>
            <person name="Xu Z."/>
            <person name="Xuan Z."/>
            <person name="Hu S."/>
            <person name="Dong W."/>
            <person name="Yang J."/>
            <person name="Chen Y."/>
            <person name="Xue Y."/>
            <person name="Xu Y."/>
            <person name="Lai X."/>
            <person name="Huang L."/>
            <person name="Dong X."/>
            <person name="Ma Y."/>
            <person name="Ling L."/>
            <person name="Tan H."/>
            <person name="Chen R."/>
            <person name="Wang J."/>
            <person name="Yu J."/>
            <person name="Yang H."/>
        </authorList>
    </citation>
    <scope>NUCLEOTIDE SEQUENCE [LARGE SCALE GENOMIC DNA]</scope>
    <source>
        <strain>DSM 15242 / JCM 11007 / NBRC 100824 / MB4</strain>
    </source>
</reference>
<feature type="chain" id="PRO_0000160970" description="Imidazolonepropionase">
    <location>
        <begin position="1"/>
        <end position="415"/>
    </location>
</feature>
<feature type="binding site" evidence="1">
    <location>
        <position position="76"/>
    </location>
    <ligand>
        <name>Fe(3+)</name>
        <dbReference type="ChEBI" id="CHEBI:29034"/>
    </ligand>
</feature>
<feature type="binding site" evidence="1">
    <location>
        <position position="76"/>
    </location>
    <ligand>
        <name>Zn(2+)</name>
        <dbReference type="ChEBI" id="CHEBI:29105"/>
    </ligand>
</feature>
<feature type="binding site" evidence="1">
    <location>
        <position position="78"/>
    </location>
    <ligand>
        <name>Fe(3+)</name>
        <dbReference type="ChEBI" id="CHEBI:29034"/>
    </ligand>
</feature>
<feature type="binding site" evidence="1">
    <location>
        <position position="78"/>
    </location>
    <ligand>
        <name>Zn(2+)</name>
        <dbReference type="ChEBI" id="CHEBI:29105"/>
    </ligand>
</feature>
<feature type="binding site" evidence="1">
    <location>
        <position position="85"/>
    </location>
    <ligand>
        <name>4-imidazolone-5-propanoate</name>
        <dbReference type="ChEBI" id="CHEBI:77893"/>
    </ligand>
</feature>
<feature type="binding site" evidence="1">
    <location>
        <position position="148"/>
    </location>
    <ligand>
        <name>4-imidazolone-5-propanoate</name>
        <dbReference type="ChEBI" id="CHEBI:77893"/>
    </ligand>
</feature>
<feature type="binding site" evidence="1">
    <location>
        <position position="148"/>
    </location>
    <ligand>
        <name>N-formimidoyl-L-glutamate</name>
        <dbReference type="ChEBI" id="CHEBI:58928"/>
    </ligand>
</feature>
<feature type="binding site" evidence="1">
    <location>
        <position position="181"/>
    </location>
    <ligand>
        <name>4-imidazolone-5-propanoate</name>
        <dbReference type="ChEBI" id="CHEBI:77893"/>
    </ligand>
</feature>
<feature type="binding site" evidence="1">
    <location>
        <position position="246"/>
    </location>
    <ligand>
        <name>Fe(3+)</name>
        <dbReference type="ChEBI" id="CHEBI:29034"/>
    </ligand>
</feature>
<feature type="binding site" evidence="1">
    <location>
        <position position="246"/>
    </location>
    <ligand>
        <name>Zn(2+)</name>
        <dbReference type="ChEBI" id="CHEBI:29105"/>
    </ligand>
</feature>
<feature type="binding site" evidence="1">
    <location>
        <position position="249"/>
    </location>
    <ligand>
        <name>4-imidazolone-5-propanoate</name>
        <dbReference type="ChEBI" id="CHEBI:77893"/>
    </ligand>
</feature>
<feature type="binding site" evidence="1">
    <location>
        <position position="320"/>
    </location>
    <ligand>
        <name>Fe(3+)</name>
        <dbReference type="ChEBI" id="CHEBI:29034"/>
    </ligand>
</feature>
<feature type="binding site" evidence="1">
    <location>
        <position position="320"/>
    </location>
    <ligand>
        <name>Zn(2+)</name>
        <dbReference type="ChEBI" id="CHEBI:29105"/>
    </ligand>
</feature>
<feature type="binding site" evidence="1">
    <location>
        <position position="322"/>
    </location>
    <ligand>
        <name>N-formimidoyl-L-glutamate</name>
        <dbReference type="ChEBI" id="CHEBI:58928"/>
    </ligand>
</feature>
<feature type="binding site" evidence="1">
    <location>
        <position position="324"/>
    </location>
    <ligand>
        <name>N-formimidoyl-L-glutamate</name>
        <dbReference type="ChEBI" id="CHEBI:58928"/>
    </ligand>
</feature>
<feature type="binding site" evidence="1">
    <location>
        <position position="325"/>
    </location>
    <ligand>
        <name>4-imidazolone-5-propanoate</name>
        <dbReference type="ChEBI" id="CHEBI:77893"/>
    </ligand>
</feature>
<accession>Q8RCH7</accession>
<sequence length="415" mass="45776">MRADLLIYNISKIYTPIGTKPLCGEDMEKIEEIENAYIAIKDGKILAAGKSPAAISAEREIDAKGMIALPGFVDPHTHVMHYGSRENEMALKLKGYSYIDILKQGGGIHSTVRATREASDEALLQKALKSLEIMLSHGVTTVEVKSGYGLNTEQEIRLLRLMNQLKSLSVVDIVPTFLGAHAIPQEFEENPWRYVEKVINEMLPKVKEEDLAEFCDVFCEEGAFDYEQSKKILEEAKKLGFRLKIHADELTHSKGGELAGILGAISADHLEEVSDEGIDLMKKAGTVAVLLPGVSFFLNRPYADARRLIERGLPVALGTDYNPGTSPTENLQLIMSFAYINMKMRAEEILTAVTLNAACAIDRGDEIGTIEEGKRADIVLVDAPNLDYMMYHFGINHVNTVIKAKGNDVVVIGIK</sequence>
<organism>
    <name type="scientific">Caldanaerobacter subterraneus subsp. tengcongensis (strain DSM 15242 / JCM 11007 / NBRC 100824 / MB4)</name>
    <name type="common">Thermoanaerobacter tengcongensis</name>
    <dbReference type="NCBI Taxonomy" id="273068"/>
    <lineage>
        <taxon>Bacteria</taxon>
        <taxon>Bacillati</taxon>
        <taxon>Bacillota</taxon>
        <taxon>Clostridia</taxon>
        <taxon>Thermoanaerobacterales</taxon>
        <taxon>Thermoanaerobacteraceae</taxon>
        <taxon>Caldanaerobacter</taxon>
    </lineage>
</organism>
<name>HUTI_CALS4</name>
<proteinExistence type="inferred from homology"/>